<feature type="chain" id="PRO_1000093056" description="S-adenosylmethionine synthase">
    <location>
        <begin position="1"/>
        <end position="394"/>
    </location>
</feature>
<feature type="region of interest" description="Flexible loop" evidence="1">
    <location>
        <begin position="99"/>
        <end position="109"/>
    </location>
</feature>
<feature type="binding site" description="in other chain" evidence="1">
    <location>
        <position position="16"/>
    </location>
    <ligand>
        <name>ATP</name>
        <dbReference type="ChEBI" id="CHEBI:30616"/>
        <note>ligand shared between two neighboring subunits</note>
    </ligand>
</feature>
<feature type="binding site" evidence="1">
    <location>
        <position position="18"/>
    </location>
    <ligand>
        <name>Mg(2+)</name>
        <dbReference type="ChEBI" id="CHEBI:18420"/>
    </ligand>
</feature>
<feature type="binding site" evidence="1">
    <location>
        <position position="44"/>
    </location>
    <ligand>
        <name>K(+)</name>
        <dbReference type="ChEBI" id="CHEBI:29103"/>
    </ligand>
</feature>
<feature type="binding site" description="in other chain" evidence="1">
    <location>
        <position position="57"/>
    </location>
    <ligand>
        <name>L-methionine</name>
        <dbReference type="ChEBI" id="CHEBI:57844"/>
        <note>ligand shared between two neighboring subunits</note>
    </ligand>
</feature>
<feature type="binding site" description="in other chain" evidence="1">
    <location>
        <position position="99"/>
    </location>
    <ligand>
        <name>L-methionine</name>
        <dbReference type="ChEBI" id="CHEBI:57844"/>
        <note>ligand shared between two neighboring subunits</note>
    </ligand>
</feature>
<feature type="binding site" description="in other chain" evidence="1">
    <location>
        <begin position="173"/>
        <end position="175"/>
    </location>
    <ligand>
        <name>ATP</name>
        <dbReference type="ChEBI" id="CHEBI:30616"/>
        <note>ligand shared between two neighboring subunits</note>
    </ligand>
</feature>
<feature type="binding site" description="in other chain" evidence="1">
    <location>
        <begin position="240"/>
        <end position="241"/>
    </location>
    <ligand>
        <name>ATP</name>
        <dbReference type="ChEBI" id="CHEBI:30616"/>
        <note>ligand shared between two neighboring subunits</note>
    </ligand>
</feature>
<feature type="binding site" evidence="1">
    <location>
        <position position="249"/>
    </location>
    <ligand>
        <name>ATP</name>
        <dbReference type="ChEBI" id="CHEBI:30616"/>
        <note>ligand shared between two neighboring subunits</note>
    </ligand>
</feature>
<feature type="binding site" evidence="1">
    <location>
        <position position="249"/>
    </location>
    <ligand>
        <name>L-methionine</name>
        <dbReference type="ChEBI" id="CHEBI:57844"/>
        <note>ligand shared between two neighboring subunits</note>
    </ligand>
</feature>
<feature type="binding site" description="in other chain" evidence="1">
    <location>
        <begin position="255"/>
        <end position="256"/>
    </location>
    <ligand>
        <name>ATP</name>
        <dbReference type="ChEBI" id="CHEBI:30616"/>
        <note>ligand shared between two neighboring subunits</note>
    </ligand>
</feature>
<feature type="binding site" evidence="1">
    <location>
        <position position="272"/>
    </location>
    <ligand>
        <name>ATP</name>
        <dbReference type="ChEBI" id="CHEBI:30616"/>
        <note>ligand shared between two neighboring subunits</note>
    </ligand>
</feature>
<feature type="binding site" evidence="1">
    <location>
        <position position="276"/>
    </location>
    <ligand>
        <name>ATP</name>
        <dbReference type="ChEBI" id="CHEBI:30616"/>
        <note>ligand shared between two neighboring subunits</note>
    </ligand>
</feature>
<feature type="binding site" description="in other chain" evidence="1">
    <location>
        <position position="280"/>
    </location>
    <ligand>
        <name>L-methionine</name>
        <dbReference type="ChEBI" id="CHEBI:57844"/>
        <note>ligand shared between two neighboring subunits</note>
    </ligand>
</feature>
<evidence type="ECO:0000255" key="1">
    <source>
        <dbReference type="HAMAP-Rule" id="MF_00086"/>
    </source>
</evidence>
<name>METK_LACCB</name>
<proteinExistence type="inferred from homology"/>
<keyword id="KW-0067">ATP-binding</keyword>
<keyword id="KW-0963">Cytoplasm</keyword>
<keyword id="KW-0460">Magnesium</keyword>
<keyword id="KW-0479">Metal-binding</keyword>
<keyword id="KW-0547">Nucleotide-binding</keyword>
<keyword id="KW-0554">One-carbon metabolism</keyword>
<keyword id="KW-0630">Potassium</keyword>
<keyword id="KW-0808">Transferase</keyword>
<reference key="1">
    <citation type="submission" date="2008-06" db="EMBL/GenBank/DDBJ databases">
        <title>Lactobacillus casei BL23 complete genome sequence.</title>
        <authorList>
            <person name="Maze A."/>
            <person name="Boel G."/>
            <person name="Bourand A."/>
            <person name="Loux V."/>
            <person name="Gibrat J.F."/>
            <person name="Zuniga M."/>
            <person name="Hartke A."/>
            <person name="Deutscher J."/>
        </authorList>
    </citation>
    <scope>NUCLEOTIDE SEQUENCE [LARGE SCALE GENOMIC DNA]</scope>
    <source>
        <strain>BL23</strain>
    </source>
</reference>
<organism>
    <name type="scientific">Lacticaseibacillus casei (strain BL23)</name>
    <name type="common">Lactobacillus casei</name>
    <dbReference type="NCBI Taxonomy" id="543734"/>
    <lineage>
        <taxon>Bacteria</taxon>
        <taxon>Bacillati</taxon>
        <taxon>Bacillota</taxon>
        <taxon>Bacilli</taxon>
        <taxon>Lactobacillales</taxon>
        <taxon>Lactobacillaceae</taxon>
        <taxon>Lacticaseibacillus</taxon>
    </lineage>
</organism>
<protein>
    <recommendedName>
        <fullName evidence="1">S-adenosylmethionine synthase</fullName>
        <shortName evidence="1">AdoMet synthase</shortName>
        <ecNumber evidence="1">2.5.1.6</ecNumber>
    </recommendedName>
    <alternativeName>
        <fullName evidence="1">MAT</fullName>
    </alternativeName>
    <alternativeName>
        <fullName evidence="1">Methionine adenosyltransferase</fullName>
    </alternativeName>
</protein>
<sequence length="394" mass="43000">MQERHLFTSESVSEGHPDKIADQISDAILDAMLEQDPDSRVACETTVTTGLVLVVGEISTKAYVDIQSVVRGTIKKIGYTKESGFDPDSVGVLVALDEQSPDIAQGVDESLEARESDTDPLDKIGAGDQGMMFGFAIDETENYMPLPISLAHALMRKTDSLRHKGEISYLRPDAKAQVTVEYDDDDNPIRVDSVVVSVQHDPDVTLEEIRRDVEAKIIRTVIPEALMDDDTKIYVNPTGRFVLGGPQADSGLTGRKIIVDTYGGFARHGGGAFSGKDATKVDRSASYAARYIAKNVVAAGLAKRVEVQLAYAIGVAKPVSVSVNTFGTSAVSEDVIEQAIRENFDLRPAGIIKMLDLKRPIYEQTAAYGHFGRTDVDLPWEHLDKVQALLKYRD</sequence>
<accession>B3WCC9</accession>
<dbReference type="EC" id="2.5.1.6" evidence="1"/>
<dbReference type="EMBL" id="FM177140">
    <property type="protein sequence ID" value="CAQ66030.1"/>
    <property type="molecule type" value="Genomic_DNA"/>
</dbReference>
<dbReference type="SMR" id="B3WCC9"/>
<dbReference type="KEGG" id="lcb:LCABL_09430"/>
<dbReference type="HOGENOM" id="CLU_041802_1_1_9"/>
<dbReference type="UniPathway" id="UPA00315">
    <property type="reaction ID" value="UER00080"/>
</dbReference>
<dbReference type="GO" id="GO:0005737">
    <property type="term" value="C:cytoplasm"/>
    <property type="evidence" value="ECO:0007669"/>
    <property type="project" value="UniProtKB-SubCell"/>
</dbReference>
<dbReference type="GO" id="GO:0005524">
    <property type="term" value="F:ATP binding"/>
    <property type="evidence" value="ECO:0007669"/>
    <property type="project" value="UniProtKB-UniRule"/>
</dbReference>
<dbReference type="GO" id="GO:0000287">
    <property type="term" value="F:magnesium ion binding"/>
    <property type="evidence" value="ECO:0007669"/>
    <property type="project" value="UniProtKB-UniRule"/>
</dbReference>
<dbReference type="GO" id="GO:0004478">
    <property type="term" value="F:methionine adenosyltransferase activity"/>
    <property type="evidence" value="ECO:0007669"/>
    <property type="project" value="UniProtKB-UniRule"/>
</dbReference>
<dbReference type="GO" id="GO:0006730">
    <property type="term" value="P:one-carbon metabolic process"/>
    <property type="evidence" value="ECO:0007669"/>
    <property type="project" value="UniProtKB-KW"/>
</dbReference>
<dbReference type="GO" id="GO:0006556">
    <property type="term" value="P:S-adenosylmethionine biosynthetic process"/>
    <property type="evidence" value="ECO:0007669"/>
    <property type="project" value="UniProtKB-UniRule"/>
</dbReference>
<dbReference type="CDD" id="cd18079">
    <property type="entry name" value="S-AdoMet_synt"/>
    <property type="match status" value="1"/>
</dbReference>
<dbReference type="FunFam" id="3.30.300.10:FF:000003">
    <property type="entry name" value="S-adenosylmethionine synthase"/>
    <property type="match status" value="1"/>
</dbReference>
<dbReference type="FunFam" id="3.30.300.10:FF:000004">
    <property type="entry name" value="S-adenosylmethionine synthase"/>
    <property type="match status" value="1"/>
</dbReference>
<dbReference type="Gene3D" id="3.30.300.10">
    <property type="match status" value="3"/>
</dbReference>
<dbReference type="HAMAP" id="MF_00086">
    <property type="entry name" value="S_AdoMet_synth1"/>
    <property type="match status" value="1"/>
</dbReference>
<dbReference type="InterPro" id="IPR022631">
    <property type="entry name" value="ADOMET_SYNTHASE_CS"/>
</dbReference>
<dbReference type="InterPro" id="IPR022630">
    <property type="entry name" value="S-AdoMet_synt_C"/>
</dbReference>
<dbReference type="InterPro" id="IPR022629">
    <property type="entry name" value="S-AdoMet_synt_central"/>
</dbReference>
<dbReference type="InterPro" id="IPR022628">
    <property type="entry name" value="S-AdoMet_synt_N"/>
</dbReference>
<dbReference type="InterPro" id="IPR002133">
    <property type="entry name" value="S-AdoMet_synthetase"/>
</dbReference>
<dbReference type="InterPro" id="IPR022636">
    <property type="entry name" value="S-AdoMet_synthetase_sfam"/>
</dbReference>
<dbReference type="NCBIfam" id="TIGR01034">
    <property type="entry name" value="metK"/>
    <property type="match status" value="1"/>
</dbReference>
<dbReference type="PANTHER" id="PTHR11964">
    <property type="entry name" value="S-ADENOSYLMETHIONINE SYNTHETASE"/>
    <property type="match status" value="1"/>
</dbReference>
<dbReference type="Pfam" id="PF02773">
    <property type="entry name" value="S-AdoMet_synt_C"/>
    <property type="match status" value="1"/>
</dbReference>
<dbReference type="Pfam" id="PF02772">
    <property type="entry name" value="S-AdoMet_synt_M"/>
    <property type="match status" value="1"/>
</dbReference>
<dbReference type="Pfam" id="PF00438">
    <property type="entry name" value="S-AdoMet_synt_N"/>
    <property type="match status" value="1"/>
</dbReference>
<dbReference type="PIRSF" id="PIRSF000497">
    <property type="entry name" value="MAT"/>
    <property type="match status" value="1"/>
</dbReference>
<dbReference type="SUPFAM" id="SSF55973">
    <property type="entry name" value="S-adenosylmethionine synthetase"/>
    <property type="match status" value="3"/>
</dbReference>
<dbReference type="PROSITE" id="PS00376">
    <property type="entry name" value="ADOMET_SYNTHASE_1"/>
    <property type="match status" value="1"/>
</dbReference>
<dbReference type="PROSITE" id="PS00377">
    <property type="entry name" value="ADOMET_SYNTHASE_2"/>
    <property type="match status" value="1"/>
</dbReference>
<comment type="function">
    <text evidence="1">Catalyzes the formation of S-adenosylmethionine (AdoMet) from methionine and ATP. The overall synthetic reaction is composed of two sequential steps, AdoMet formation and the subsequent tripolyphosphate hydrolysis which occurs prior to release of AdoMet from the enzyme.</text>
</comment>
<comment type="catalytic activity">
    <reaction evidence="1">
        <text>L-methionine + ATP + H2O = S-adenosyl-L-methionine + phosphate + diphosphate</text>
        <dbReference type="Rhea" id="RHEA:21080"/>
        <dbReference type="ChEBI" id="CHEBI:15377"/>
        <dbReference type="ChEBI" id="CHEBI:30616"/>
        <dbReference type="ChEBI" id="CHEBI:33019"/>
        <dbReference type="ChEBI" id="CHEBI:43474"/>
        <dbReference type="ChEBI" id="CHEBI:57844"/>
        <dbReference type="ChEBI" id="CHEBI:59789"/>
        <dbReference type="EC" id="2.5.1.6"/>
    </reaction>
</comment>
<comment type="cofactor">
    <cofactor evidence="1">
        <name>Mg(2+)</name>
        <dbReference type="ChEBI" id="CHEBI:18420"/>
    </cofactor>
    <text evidence="1">Binds 2 divalent ions per subunit.</text>
</comment>
<comment type="cofactor">
    <cofactor evidence="1">
        <name>K(+)</name>
        <dbReference type="ChEBI" id="CHEBI:29103"/>
    </cofactor>
    <text evidence="1">Binds 1 potassium ion per subunit.</text>
</comment>
<comment type="pathway">
    <text evidence="1">Amino-acid biosynthesis; S-adenosyl-L-methionine biosynthesis; S-adenosyl-L-methionine from L-methionine: step 1/1.</text>
</comment>
<comment type="subunit">
    <text evidence="1">Homotetramer; dimer of dimers.</text>
</comment>
<comment type="subcellular location">
    <subcellularLocation>
        <location evidence="1">Cytoplasm</location>
    </subcellularLocation>
</comment>
<comment type="similarity">
    <text evidence="1">Belongs to the AdoMet synthase family.</text>
</comment>
<gene>
    <name evidence="1" type="primary">metK</name>
    <name type="ordered locus">LCABL_09430</name>
</gene>